<name>MYCP1_MYCS2</name>
<evidence type="ECO:0000250" key="1">
    <source>
        <dbReference type="UniProtKB" id="O05461"/>
    </source>
</evidence>
<evidence type="ECO:0000255" key="2"/>
<evidence type="ECO:0000255" key="3">
    <source>
        <dbReference type="PROSITE-ProRule" id="PRU01240"/>
    </source>
</evidence>
<evidence type="ECO:0000256" key="4">
    <source>
        <dbReference type="SAM" id="MobiDB-lite"/>
    </source>
</evidence>
<evidence type="ECO:0000269" key="5">
    <source>
    </source>
</evidence>
<evidence type="ECO:0000269" key="6">
    <source>
    </source>
</evidence>
<evidence type="ECO:0000269" key="7">
    <source>
    </source>
</evidence>
<evidence type="ECO:0000303" key="8">
    <source>
    </source>
</evidence>
<evidence type="ECO:0000303" key="9">
    <source>
    </source>
</evidence>
<evidence type="ECO:0000305" key="10"/>
<evidence type="ECO:0000305" key="11">
    <source>
    </source>
</evidence>
<evidence type="ECO:0000305" key="12">
    <source>
    </source>
</evidence>
<evidence type="ECO:0000312" key="13">
    <source>
        <dbReference type="EMBL" id="ABK70081.1"/>
    </source>
</evidence>
<evidence type="ECO:0000312" key="14">
    <source>
        <dbReference type="EMBL" id="AFP36563.1"/>
    </source>
</evidence>
<evidence type="ECO:0007744" key="15">
    <source>
        <dbReference type="PDB" id="4J94"/>
    </source>
</evidence>
<evidence type="ECO:0007744" key="16">
    <source>
        <dbReference type="PDB" id="4KB5"/>
    </source>
</evidence>
<evidence type="ECO:0007744" key="17">
    <source>
        <dbReference type="PDB" id="4KPG"/>
    </source>
</evidence>
<evidence type="ECO:0007744" key="18">
    <source>
        <dbReference type="PDB" id="4M1Z"/>
    </source>
</evidence>
<evidence type="ECO:0007829" key="19">
    <source>
        <dbReference type="PDB" id="4J94"/>
    </source>
</evidence>
<evidence type="ECO:0007829" key="20">
    <source>
        <dbReference type="PDB" id="4KB5"/>
    </source>
</evidence>
<evidence type="ECO:0007829" key="21">
    <source>
        <dbReference type="PDB" id="4KPG"/>
    </source>
</evidence>
<protein>
    <recommendedName>
        <fullName evidence="9">Mycosin-1</fullName>
        <ecNumber evidence="5">3.4.21.-</ecNumber>
    </recommendedName>
    <alternativeName>
        <fullName evidence="8">MycP1 protease</fullName>
    </alternativeName>
</protein>
<gene>
    <name evidence="8" type="primary">mycP1</name>
    <name evidence="13" type="ordered locus">MSMEG_0083</name>
    <name evidence="14" type="ordered locus">MSMEI_0081</name>
</gene>
<proteinExistence type="evidence at protein level"/>
<keyword id="KW-0002">3D-structure</keyword>
<keyword id="KW-1003">Cell membrane</keyword>
<keyword id="KW-1015">Disulfide bond</keyword>
<keyword id="KW-0378">Hydrolase</keyword>
<keyword id="KW-0472">Membrane</keyword>
<keyword id="KW-0645">Protease</keyword>
<keyword id="KW-1185">Reference proteome</keyword>
<keyword id="KW-0720">Serine protease</keyword>
<keyword id="KW-0732">Signal</keyword>
<keyword id="KW-0812">Transmembrane</keyword>
<keyword id="KW-1133">Transmembrane helix</keyword>
<comment type="function">
    <text evidence="5 6">May play a dual role in regulation of ESX-1 secretion and virulence. Acts as a protease that cleaves EspB.</text>
</comment>
<comment type="subcellular location">
    <subcellularLocation>
        <location evidence="1">Cell membrane</location>
        <topology evidence="2">Single-pass membrane protein</topology>
    </subcellularLocation>
    <text evidence="1">Cell wall-associated.</text>
</comment>
<comment type="domain">
    <text evidence="6 7">The N-terminal extension wraps intimately around the catalytic domain where, tethered by a disulfide bond, it forms additional interactions with a unique extended loop that protrudes from the catalytic core. It might contribute to the conformational stability of the active site cleft and surrounding regions.</text>
</comment>
<comment type="disruption phenotype">
    <text evidence="5">Deletion mutant fails to secrete EsxA.</text>
</comment>
<comment type="similarity">
    <text evidence="10">Belongs to the peptidase S8 family.</text>
</comment>
<reference key="1">
    <citation type="submission" date="2006-10" db="EMBL/GenBank/DDBJ databases">
        <authorList>
            <person name="Fleischmann R.D."/>
            <person name="Dodson R.J."/>
            <person name="Haft D.H."/>
            <person name="Merkel J.S."/>
            <person name="Nelson W.C."/>
            <person name="Fraser C.M."/>
        </authorList>
    </citation>
    <scope>NUCLEOTIDE SEQUENCE [LARGE SCALE GENOMIC DNA]</scope>
    <source>
        <strain>ATCC 700084 / mc(2)155</strain>
    </source>
</reference>
<reference key="2">
    <citation type="journal article" date="2007" name="Genome Biol.">
        <title>Interrupted coding sequences in Mycobacterium smegmatis: authentic mutations or sequencing errors?</title>
        <authorList>
            <person name="Deshayes C."/>
            <person name="Perrodou E."/>
            <person name="Gallien S."/>
            <person name="Euphrasie D."/>
            <person name="Schaeffer C."/>
            <person name="Van-Dorsselaer A."/>
            <person name="Poch O."/>
            <person name="Lecompte O."/>
            <person name="Reyrat J.-M."/>
        </authorList>
    </citation>
    <scope>NUCLEOTIDE SEQUENCE [LARGE SCALE GENOMIC DNA]</scope>
    <source>
        <strain>ATCC 700084 / mc(2)155</strain>
    </source>
</reference>
<reference key="3">
    <citation type="journal article" date="2009" name="Genome Res.">
        <title>Ortho-proteogenomics: multiple proteomes investigation through orthology and a new MS-based protocol.</title>
        <authorList>
            <person name="Gallien S."/>
            <person name="Perrodou E."/>
            <person name="Carapito C."/>
            <person name="Deshayes C."/>
            <person name="Reyrat J.-M."/>
            <person name="Van Dorsselaer A."/>
            <person name="Poch O."/>
            <person name="Schaeffer C."/>
            <person name="Lecompte O."/>
        </authorList>
    </citation>
    <scope>NUCLEOTIDE SEQUENCE [LARGE SCALE GENOMIC DNA]</scope>
    <source>
        <strain>ATCC 700084 / mc(2)155</strain>
    </source>
</reference>
<reference key="4">
    <citation type="journal article" date="2010" name="Cell Host Microbe">
        <title>Mycobacterium tuberculosis MycP1 protease plays a dual role in regulation of ESX-1 secretion and virulence.</title>
        <authorList>
            <person name="Ohol Y.M."/>
            <person name="Goetz D.H."/>
            <person name="Chan K."/>
            <person name="Shiloh M.U."/>
            <person name="Craik C.S."/>
            <person name="Cox J.S."/>
        </authorList>
    </citation>
    <scope>FUNCTION</scope>
    <scope>DISRUPTION PHENOTYPE</scope>
    <scope>MUTAGENESIS OF SER-334</scope>
    <source>
        <strain>ATCC 700084 / mc(2)155</strain>
    </source>
</reference>
<reference evidence="15 17" key="5">
    <citation type="journal article" date="2013" name="J. Biol. Chem.">
        <title>Structure of the mycosin-1 protease from the mycobacterial ESX-1 protein type VII secretion system.</title>
        <authorList>
            <person name="Solomonson M."/>
            <person name="Huesgen P.F."/>
            <person name="Wasney G.A."/>
            <person name="Watanabe N."/>
            <person name="Gruninger R.J."/>
            <person name="Prehna G."/>
            <person name="Overall C.M."/>
            <person name="Strynadka N.C."/>
        </authorList>
    </citation>
    <scope>X-RAY CRYSTALLOGRAPHY (1.86 ANGSTROMS) OF 24-407</scope>
    <scope>FUNCTION AS A PROTEASE</scope>
    <scope>DOMAIN</scope>
    <scope>MUTAGENESIS OF SER-334</scope>
    <scope>ACTIVE SITES</scope>
    <scope>DISULFIDE BONDS</scope>
</reference>
<reference evidence="16 18" key="6">
    <citation type="journal article" date="2013" name="Protein Cell">
        <title>The putative propeptide of MycP1 in mycobacterial type VII secretion system does not inhibit protease activity but improves protein stability.</title>
        <authorList>
            <person name="Sun D."/>
            <person name="Liu Q."/>
            <person name="He Y."/>
            <person name="Wang C."/>
            <person name="Wu F."/>
            <person name="Tian C."/>
            <person name="Zang J."/>
        </authorList>
    </citation>
    <scope>X-RAY CRYSTALLOGRAPHY (2.15 ANGSTROMS) OF 24-422</scope>
    <scope>DISULFIDE BONDS</scope>
    <scope>ACTIVE SITES</scope>
    <scope>DOMAIN</scope>
    <source>
        <strain>ATCC 700084 / mc(2)155</strain>
    </source>
</reference>
<organism>
    <name type="scientific">Mycolicibacterium smegmatis (strain ATCC 700084 / mc(2)155)</name>
    <name type="common">Mycobacterium smegmatis</name>
    <dbReference type="NCBI Taxonomy" id="246196"/>
    <lineage>
        <taxon>Bacteria</taxon>
        <taxon>Bacillati</taxon>
        <taxon>Actinomycetota</taxon>
        <taxon>Actinomycetes</taxon>
        <taxon>Mycobacteriales</taxon>
        <taxon>Mycobacteriaceae</taxon>
        <taxon>Mycolicibacterium</taxon>
    </lineage>
</organism>
<dbReference type="EC" id="3.4.21.-" evidence="5"/>
<dbReference type="EMBL" id="CP000480">
    <property type="protein sequence ID" value="ABK70081.1"/>
    <property type="molecule type" value="Genomic_DNA"/>
</dbReference>
<dbReference type="EMBL" id="CP001663">
    <property type="protein sequence ID" value="AFP36563.1"/>
    <property type="molecule type" value="Genomic_DNA"/>
</dbReference>
<dbReference type="RefSeq" id="WP_011726654.1">
    <property type="nucleotide sequence ID" value="NZ_SIJM01000048.1"/>
</dbReference>
<dbReference type="RefSeq" id="YP_884499.1">
    <property type="nucleotide sequence ID" value="NC_008596.1"/>
</dbReference>
<dbReference type="PDB" id="4J94">
    <property type="method" value="X-ray"/>
    <property type="resolution" value="1.86 A"/>
    <property type="chains" value="A=24-407"/>
</dbReference>
<dbReference type="PDB" id="4KB5">
    <property type="method" value="X-ray"/>
    <property type="resolution" value="2.15 A"/>
    <property type="chains" value="A=24-422"/>
</dbReference>
<dbReference type="PDB" id="4KPG">
    <property type="method" value="X-ray"/>
    <property type="resolution" value="2.15 A"/>
    <property type="chains" value="A=24-407"/>
</dbReference>
<dbReference type="PDB" id="4M1Z">
    <property type="method" value="X-ray"/>
    <property type="resolution" value="2.25 A"/>
    <property type="chains" value="A/B=63-422, C/D=403-422"/>
</dbReference>
<dbReference type="PDBsum" id="4J94"/>
<dbReference type="PDBsum" id="4KB5"/>
<dbReference type="PDBsum" id="4KPG"/>
<dbReference type="PDBsum" id="4M1Z"/>
<dbReference type="SMR" id="A0QNL1"/>
<dbReference type="STRING" id="246196.MSMEG_0083"/>
<dbReference type="MEROPS" id="S08.131"/>
<dbReference type="PaxDb" id="246196-MSMEI_0081"/>
<dbReference type="GeneID" id="93455009"/>
<dbReference type="KEGG" id="msb:LJ00_00420"/>
<dbReference type="KEGG" id="msg:MSMEI_0081"/>
<dbReference type="KEGG" id="msm:MSMEG_0083"/>
<dbReference type="PATRIC" id="fig|246196.19.peg.81"/>
<dbReference type="eggNOG" id="COG1404">
    <property type="taxonomic scope" value="Bacteria"/>
</dbReference>
<dbReference type="OrthoDB" id="9798386at2"/>
<dbReference type="EvolutionaryTrace" id="A0QNL1"/>
<dbReference type="Proteomes" id="UP000000757">
    <property type="component" value="Chromosome"/>
</dbReference>
<dbReference type="Proteomes" id="UP000006158">
    <property type="component" value="Chromosome"/>
</dbReference>
<dbReference type="GO" id="GO:0005886">
    <property type="term" value="C:plasma membrane"/>
    <property type="evidence" value="ECO:0007669"/>
    <property type="project" value="UniProtKB-SubCell"/>
</dbReference>
<dbReference type="GO" id="GO:0004252">
    <property type="term" value="F:serine-type endopeptidase activity"/>
    <property type="evidence" value="ECO:0007669"/>
    <property type="project" value="InterPro"/>
</dbReference>
<dbReference type="GO" id="GO:0016485">
    <property type="term" value="P:protein processing"/>
    <property type="evidence" value="ECO:0007669"/>
    <property type="project" value="TreeGrafter"/>
</dbReference>
<dbReference type="FunFam" id="3.40.50.200:FF:000018">
    <property type="entry name" value="Type VII secretion-associated serine protease mycosin"/>
    <property type="match status" value="1"/>
</dbReference>
<dbReference type="Gene3D" id="3.40.50.200">
    <property type="entry name" value="Peptidase S8/S53 domain"/>
    <property type="match status" value="1"/>
</dbReference>
<dbReference type="InterPro" id="IPR000209">
    <property type="entry name" value="Peptidase_S8/S53_dom"/>
</dbReference>
<dbReference type="InterPro" id="IPR036852">
    <property type="entry name" value="Peptidase_S8/S53_dom_sf"/>
</dbReference>
<dbReference type="InterPro" id="IPR015500">
    <property type="entry name" value="Peptidase_S8_subtilisin-rel"/>
</dbReference>
<dbReference type="InterPro" id="IPR023834">
    <property type="entry name" value="T7SS_pept_S8A_mycosin"/>
</dbReference>
<dbReference type="NCBIfam" id="TIGR03921">
    <property type="entry name" value="T7SS_mycosin"/>
    <property type="match status" value="1"/>
</dbReference>
<dbReference type="PANTHER" id="PTHR42884:SF14">
    <property type="entry name" value="NEUROENDOCRINE CONVERTASE 1"/>
    <property type="match status" value="1"/>
</dbReference>
<dbReference type="PANTHER" id="PTHR42884">
    <property type="entry name" value="PROPROTEIN CONVERTASE SUBTILISIN/KEXIN-RELATED"/>
    <property type="match status" value="1"/>
</dbReference>
<dbReference type="Pfam" id="PF00082">
    <property type="entry name" value="Peptidase_S8"/>
    <property type="match status" value="1"/>
</dbReference>
<dbReference type="PRINTS" id="PR00723">
    <property type="entry name" value="SUBTILISIN"/>
</dbReference>
<dbReference type="SUPFAM" id="SSF52743">
    <property type="entry name" value="Subtilisin-like"/>
    <property type="match status" value="1"/>
</dbReference>
<dbReference type="PROSITE" id="PS51892">
    <property type="entry name" value="SUBTILASE"/>
    <property type="match status" value="1"/>
</dbReference>
<accession>A0QNL1</accession>
<sequence length="449" mass="46454">MQRVAVMVLAVLLALFSAPPAWAIDPPVIDAGAVPPDETGPDQPTEQRKICATPTVMPNSNFADRPWANDYLRIQEAQKFATGAGVTVAVIDTGVNGSPRVPAEPGGDFVDAAGNGMSDCDAHGTMTAAIIGGRPSPTDGFVGMAPDVRLLSLRQTSVAFQPKGARQDPNDPNTTQTAGSIRSLARSVVHAANLGAQVINISEAACYKVTRRIDETSLGAAINYAVNVKGAVIVVAAGNTGQDCSQNPPPDPSVPSDPRGWREVQTIVSPAWYDPLVLTVGSIGQNGQPSNFSMSGPWVGAAAPGENLTSLGYDGQPVNATPGEDGPVPLNGTSFSAAYVSGLAALVKQRFPDLTPAQIINRITATARHPGGGVDNYVGAGVIDPVAALTWEIPDGPEKAPFRVKEVPPPVYIPPPDRGPITAVVIAGATLAFALGIGALARRALRRKQ</sequence>
<feature type="signal peptide" evidence="2">
    <location>
        <begin position="1"/>
        <end position="23"/>
    </location>
</feature>
<feature type="chain" id="PRO_5007633026" description="Mycosin-1">
    <location>
        <begin position="24"/>
        <end position="449"/>
    </location>
</feature>
<feature type="transmembrane region" description="Helical" evidence="2">
    <location>
        <begin position="421"/>
        <end position="441"/>
    </location>
</feature>
<feature type="domain" description="Peptidase S8" evidence="3">
    <location>
        <begin position="66"/>
        <end position="389"/>
    </location>
</feature>
<feature type="region of interest" description="Disordered" evidence="4">
    <location>
        <begin position="160"/>
        <end position="179"/>
    </location>
</feature>
<feature type="region of interest" description="Disordered" evidence="4">
    <location>
        <begin position="240"/>
        <end position="259"/>
    </location>
</feature>
<feature type="compositionally biased region" description="Polar residues" evidence="4">
    <location>
        <begin position="170"/>
        <end position="179"/>
    </location>
</feature>
<feature type="active site" description="Charge relay system" evidence="3 11 12">
    <location>
        <position position="92"/>
    </location>
</feature>
<feature type="active site" description="Charge relay system" evidence="3 11 12">
    <location>
        <position position="123"/>
    </location>
</feature>
<feature type="active site" description="Charge relay system" evidence="3 11 12">
    <location>
        <position position="334"/>
    </location>
</feature>
<feature type="disulfide bond" evidence="6 7 15 16 17">
    <location>
        <begin position="51"/>
        <end position="120"/>
    </location>
</feature>
<feature type="disulfide bond" evidence="6 7 15 16 17">
    <location>
        <begin position="206"/>
        <end position="244"/>
    </location>
</feature>
<feature type="mutagenesis site" description="Lack of protease activity. Increases EsxA secretion." evidence="5 6">
    <original>S</original>
    <variation>A</variation>
    <location>
        <position position="334"/>
    </location>
</feature>
<feature type="strand" evidence="19">
    <location>
        <begin position="45"/>
        <end position="47"/>
    </location>
</feature>
<feature type="strand" evidence="19">
    <location>
        <begin position="62"/>
        <end position="64"/>
    </location>
</feature>
<feature type="helix" evidence="19">
    <location>
        <begin position="67"/>
        <end position="71"/>
    </location>
</feature>
<feature type="helix" evidence="19">
    <location>
        <begin position="74"/>
        <end position="77"/>
    </location>
</feature>
<feature type="turn" evidence="19">
    <location>
        <begin position="78"/>
        <end position="80"/>
    </location>
</feature>
<feature type="strand" evidence="19">
    <location>
        <begin position="87"/>
        <end position="93"/>
    </location>
</feature>
<feature type="strand" evidence="20">
    <location>
        <begin position="99"/>
        <end position="101"/>
    </location>
</feature>
<feature type="strand" evidence="19">
    <location>
        <begin position="104"/>
        <end position="113"/>
    </location>
</feature>
<feature type="strand" evidence="19">
    <location>
        <begin position="120"/>
        <end position="123"/>
    </location>
</feature>
<feature type="helix" evidence="19">
    <location>
        <begin position="124"/>
        <end position="132"/>
    </location>
</feature>
<feature type="strand" evidence="19">
    <location>
        <begin position="149"/>
        <end position="154"/>
    </location>
</feature>
<feature type="strand" evidence="19">
    <location>
        <begin position="158"/>
        <end position="162"/>
    </location>
</feature>
<feature type="helix" evidence="19">
    <location>
        <begin position="172"/>
        <end position="174"/>
    </location>
</feature>
<feature type="helix" evidence="19">
    <location>
        <begin position="176"/>
        <end position="193"/>
    </location>
</feature>
<feature type="strand" evidence="19">
    <location>
        <begin position="197"/>
        <end position="201"/>
    </location>
</feature>
<feature type="strand" evidence="19">
    <location>
        <begin position="205"/>
        <end position="208"/>
    </location>
</feature>
<feature type="helix" evidence="21">
    <location>
        <begin position="209"/>
        <end position="211"/>
    </location>
</feature>
<feature type="helix" evidence="19">
    <location>
        <begin position="216"/>
        <end position="227"/>
    </location>
</feature>
<feature type="strand" evidence="19">
    <location>
        <begin position="232"/>
        <end position="236"/>
    </location>
</feature>
<feature type="strand" evidence="19">
    <location>
        <begin position="241"/>
        <end position="243"/>
    </location>
</feature>
<feature type="strand" evidence="20">
    <location>
        <begin position="255"/>
        <end position="257"/>
    </location>
</feature>
<feature type="helix" evidence="19">
    <location>
        <begin position="261"/>
        <end position="263"/>
    </location>
</feature>
<feature type="strand" evidence="19">
    <location>
        <begin position="266"/>
        <end position="269"/>
    </location>
</feature>
<feature type="helix" evidence="19">
    <location>
        <begin position="271"/>
        <end position="273"/>
    </location>
</feature>
<feature type="turn" evidence="19">
    <location>
        <begin position="274"/>
        <end position="276"/>
    </location>
</feature>
<feature type="strand" evidence="19">
    <location>
        <begin position="277"/>
        <end position="283"/>
    </location>
</feature>
<feature type="strand" evidence="19">
    <location>
        <begin position="287"/>
        <end position="289"/>
    </location>
</feature>
<feature type="strand" evidence="19">
    <location>
        <begin position="301"/>
        <end position="304"/>
    </location>
</feature>
<feature type="strand" evidence="19">
    <location>
        <begin position="306"/>
        <end position="308"/>
    </location>
</feature>
<feature type="strand" evidence="21">
    <location>
        <begin position="320"/>
        <end position="323"/>
    </location>
</feature>
<feature type="strand" evidence="19">
    <location>
        <begin position="328"/>
        <end position="330"/>
    </location>
</feature>
<feature type="helix" evidence="19">
    <location>
        <begin position="333"/>
        <end position="350"/>
    </location>
</feature>
<feature type="helix" evidence="19">
    <location>
        <begin position="356"/>
        <end position="365"/>
    </location>
</feature>
<feature type="turn" evidence="19">
    <location>
        <begin position="376"/>
        <end position="378"/>
    </location>
</feature>
<feature type="helix" evidence="19">
    <location>
        <begin position="385"/>
        <end position="390"/>
    </location>
</feature>